<proteinExistence type="evidence at transcript level"/>
<dbReference type="EMBL" id="BC066455">
    <property type="protein sequence ID" value="AAH66455.1"/>
    <property type="molecule type" value="mRNA"/>
</dbReference>
<dbReference type="RefSeq" id="NP_996974.1">
    <property type="nucleotide sequence ID" value="NM_207091.1"/>
</dbReference>
<dbReference type="SMR" id="Q6NYU7"/>
<dbReference type="FunCoup" id="Q6NYU7">
    <property type="interactions" value="843"/>
</dbReference>
<dbReference type="STRING" id="7955.ENSDARP00000051528"/>
<dbReference type="PaxDb" id="7955-ENSDARP00000051528"/>
<dbReference type="GeneID" id="404623"/>
<dbReference type="KEGG" id="dre:404623"/>
<dbReference type="AGR" id="ZFIN:ZDB-GENE-040426-2411"/>
<dbReference type="CTD" id="139596"/>
<dbReference type="ZFIN" id="ZDB-GENE-040426-2411">
    <property type="gene designation" value="uprt"/>
</dbReference>
<dbReference type="eggNOG" id="KOG1017">
    <property type="taxonomic scope" value="Eukaryota"/>
</dbReference>
<dbReference type="InParanoid" id="Q6NYU7"/>
<dbReference type="OrthoDB" id="106623at2759"/>
<dbReference type="PhylomeDB" id="Q6NYU7"/>
<dbReference type="PRO" id="PR:Q6NYU7"/>
<dbReference type="Proteomes" id="UP000000437">
    <property type="component" value="Alternate scaffold 5"/>
</dbReference>
<dbReference type="Proteomes" id="UP000000437">
    <property type="component" value="Chromosome 5"/>
</dbReference>
<dbReference type="GO" id="GO:0005737">
    <property type="term" value="C:cytoplasm"/>
    <property type="evidence" value="ECO:0007669"/>
    <property type="project" value="UniProtKB-SubCell"/>
</dbReference>
<dbReference type="GO" id="GO:0005634">
    <property type="term" value="C:nucleus"/>
    <property type="evidence" value="ECO:0007669"/>
    <property type="project" value="UniProtKB-SubCell"/>
</dbReference>
<dbReference type="GO" id="GO:0005525">
    <property type="term" value="F:GTP binding"/>
    <property type="evidence" value="ECO:0007669"/>
    <property type="project" value="UniProtKB-KW"/>
</dbReference>
<dbReference type="CDD" id="cd06223">
    <property type="entry name" value="PRTases_typeI"/>
    <property type="match status" value="1"/>
</dbReference>
<dbReference type="FunFam" id="3.40.50.2020:FF:000026">
    <property type="entry name" value="Uracil phosphoribosyltransferase homolog"/>
    <property type="match status" value="1"/>
</dbReference>
<dbReference type="Gene3D" id="3.40.50.2020">
    <property type="match status" value="1"/>
</dbReference>
<dbReference type="InterPro" id="IPR000836">
    <property type="entry name" value="PRibTrfase_dom"/>
</dbReference>
<dbReference type="InterPro" id="IPR029057">
    <property type="entry name" value="PRTase-like"/>
</dbReference>
<dbReference type="Pfam" id="PF14681">
    <property type="entry name" value="UPRTase"/>
    <property type="match status" value="1"/>
</dbReference>
<dbReference type="SUPFAM" id="SSF53271">
    <property type="entry name" value="PRTase-like"/>
    <property type="match status" value="1"/>
</dbReference>
<keyword id="KW-0963">Cytoplasm</keyword>
<keyword id="KW-0342">GTP-binding</keyword>
<keyword id="KW-0547">Nucleotide-binding</keyword>
<keyword id="KW-0539">Nucleus</keyword>
<keyword id="KW-1185">Reference proteome</keyword>
<name>UPP_DANRE</name>
<comment type="subcellular location">
    <subcellularLocation>
        <location evidence="1">Cytoplasm</location>
    </subcellularLocation>
    <subcellularLocation>
        <location evidence="1">Nucleus</location>
    </subcellularLocation>
</comment>
<comment type="similarity">
    <text evidence="3">Belongs to the UPRTase family.</text>
</comment>
<comment type="caution">
    <text evidence="3">The uracil binding region known from UPRTases is missing.</text>
</comment>
<gene>
    <name type="primary">uprt</name>
    <name type="ORF">zgc:77421</name>
</gene>
<protein>
    <recommendedName>
        <fullName>Uracil phosphoribosyltransferase homolog</fullName>
    </recommendedName>
</protein>
<sequence>MPCHNQQLNNNSESPEHAAKHVRFAQSSAAAAETCQNDAEQPEYQTTSEIHQQIGPQLKLLPLNDQIRELQTIIRDKTTSRGDFVFCADRLIRLVVEEGLNQLPYSECTVTTPTGHKYEGVKFEKGNCGVSIMRSGEAMEQGLRDCCRSIRIGKILIQSDEETQKAKVYYAKFPPDISRRKVLLMYPILSTGNTVIEAVRVLTEHGLQAKHIILLSLFSTPHGARSIVQEFPDITILTTEVHAVAPTHFGQRYFGTD</sequence>
<reference key="1">
    <citation type="submission" date="2004-02" db="EMBL/GenBank/DDBJ databases">
        <authorList>
            <consortium name="NIH - Zebrafish Gene Collection (ZGC) project"/>
        </authorList>
    </citation>
    <scope>NUCLEOTIDE SEQUENCE [LARGE SCALE MRNA]</scope>
    <source>
        <tissue>Embryo</tissue>
    </source>
</reference>
<feature type="chain" id="PRO_0000254538" description="Uracil phosphoribosyltransferase homolog">
    <location>
        <begin position="1"/>
        <end position="257"/>
    </location>
</feature>
<feature type="binding site" evidence="2">
    <location>
        <position position="81"/>
    </location>
    <ligand>
        <name>GTP</name>
        <dbReference type="ChEBI" id="CHEBI:37565"/>
    </ligand>
</feature>
<feature type="binding site" evidence="2">
    <location>
        <position position="90"/>
    </location>
    <ligand>
        <name>GTP</name>
        <dbReference type="ChEBI" id="CHEBI:37565"/>
    </ligand>
</feature>
<feature type="binding site" evidence="2">
    <location>
        <begin position="124"/>
        <end position="127"/>
    </location>
    <ligand>
        <name>GTP</name>
        <dbReference type="ChEBI" id="CHEBI:37565"/>
    </ligand>
</feature>
<feature type="binding site" evidence="2">
    <location>
        <position position="134"/>
    </location>
    <ligand>
        <name>5-phospho-alpha-D-ribose 1-diphosphate</name>
        <dbReference type="ChEBI" id="CHEBI:58017"/>
    </ligand>
</feature>
<feature type="binding site" evidence="2">
    <location>
        <position position="151"/>
    </location>
    <ligand>
        <name>GTP</name>
        <dbReference type="ChEBI" id="CHEBI:37565"/>
    </ligand>
</feature>
<feature type="binding site" evidence="2">
    <location>
        <position position="180"/>
    </location>
    <ligand>
        <name>GTP</name>
        <dbReference type="ChEBI" id="CHEBI:37565"/>
    </ligand>
</feature>
<feature type="binding site" evidence="2">
    <location>
        <begin position="186"/>
        <end position="194"/>
    </location>
    <ligand>
        <name>5-phospho-alpha-D-ribose 1-diphosphate</name>
        <dbReference type="ChEBI" id="CHEBI:58017"/>
    </ligand>
</feature>
<feature type="binding site" evidence="2">
    <location>
        <begin position="247"/>
        <end position="249"/>
    </location>
    <ligand>
        <name>uracil</name>
        <dbReference type="ChEBI" id="CHEBI:17568"/>
    </ligand>
</feature>
<accession>Q6NYU7</accession>
<organism>
    <name type="scientific">Danio rerio</name>
    <name type="common">Zebrafish</name>
    <name type="synonym">Brachydanio rerio</name>
    <dbReference type="NCBI Taxonomy" id="7955"/>
    <lineage>
        <taxon>Eukaryota</taxon>
        <taxon>Metazoa</taxon>
        <taxon>Chordata</taxon>
        <taxon>Craniata</taxon>
        <taxon>Vertebrata</taxon>
        <taxon>Euteleostomi</taxon>
        <taxon>Actinopterygii</taxon>
        <taxon>Neopterygii</taxon>
        <taxon>Teleostei</taxon>
        <taxon>Ostariophysi</taxon>
        <taxon>Cypriniformes</taxon>
        <taxon>Danionidae</taxon>
        <taxon>Danioninae</taxon>
        <taxon>Danio</taxon>
    </lineage>
</organism>
<evidence type="ECO:0000250" key="1"/>
<evidence type="ECO:0000250" key="2">
    <source>
        <dbReference type="UniProtKB" id="Q26998"/>
    </source>
</evidence>
<evidence type="ECO:0000305" key="3"/>